<organism>
    <name type="scientific">Clostridium perfringens (strain ATCC 13124 / DSM 756 / JCM 1290 / NCIMB 6125 / NCTC 8237 / Type A)</name>
    <dbReference type="NCBI Taxonomy" id="195103"/>
    <lineage>
        <taxon>Bacteria</taxon>
        <taxon>Bacillati</taxon>
        <taxon>Bacillota</taxon>
        <taxon>Clostridia</taxon>
        <taxon>Eubacteriales</taxon>
        <taxon>Clostridiaceae</taxon>
        <taxon>Clostridium</taxon>
    </lineage>
</organism>
<dbReference type="EMBL" id="CP000246">
    <property type="protein sequence ID" value="ABG84933.2"/>
    <property type="molecule type" value="Genomic_DNA"/>
</dbReference>
<dbReference type="SMR" id="Q0TNE1"/>
<dbReference type="STRING" id="195103.CPF_2428"/>
<dbReference type="PaxDb" id="195103-CPF_2428"/>
<dbReference type="KEGG" id="cpf:CPF_2428"/>
<dbReference type="eggNOG" id="COG1186">
    <property type="taxonomic scope" value="Bacteria"/>
</dbReference>
<dbReference type="HOGENOM" id="CLU_217142_1_0_9"/>
<dbReference type="Proteomes" id="UP000001823">
    <property type="component" value="Chromosome"/>
</dbReference>
<dbReference type="GO" id="GO:0005737">
    <property type="term" value="C:cytoplasm"/>
    <property type="evidence" value="ECO:0007669"/>
    <property type="project" value="UniProtKB-SubCell"/>
</dbReference>
<dbReference type="GO" id="GO:0016149">
    <property type="term" value="F:translation release factor activity, codon specific"/>
    <property type="evidence" value="ECO:0007669"/>
    <property type="project" value="UniProtKB-UniRule"/>
</dbReference>
<dbReference type="FunFam" id="3.30.160.20:FF:000010">
    <property type="entry name" value="Peptide chain release factor 2"/>
    <property type="match status" value="1"/>
</dbReference>
<dbReference type="Gene3D" id="3.30.160.20">
    <property type="match status" value="1"/>
</dbReference>
<dbReference type="Gene3D" id="3.30.70.1660">
    <property type="match status" value="1"/>
</dbReference>
<dbReference type="Gene3D" id="1.20.58.410">
    <property type="entry name" value="Release factor"/>
    <property type="match status" value="1"/>
</dbReference>
<dbReference type="HAMAP" id="MF_00094">
    <property type="entry name" value="Rel_fac_2"/>
    <property type="match status" value="1"/>
</dbReference>
<dbReference type="InterPro" id="IPR005139">
    <property type="entry name" value="PCRF"/>
</dbReference>
<dbReference type="InterPro" id="IPR000352">
    <property type="entry name" value="Pep_chain_release_fac_I"/>
</dbReference>
<dbReference type="InterPro" id="IPR045853">
    <property type="entry name" value="Pep_chain_release_fac_I_sf"/>
</dbReference>
<dbReference type="InterPro" id="IPR004374">
    <property type="entry name" value="PrfB"/>
</dbReference>
<dbReference type="NCBIfam" id="TIGR00020">
    <property type="entry name" value="prfB"/>
    <property type="match status" value="1"/>
</dbReference>
<dbReference type="PANTHER" id="PTHR43116:SF3">
    <property type="entry name" value="CLASS I PEPTIDE CHAIN RELEASE FACTOR"/>
    <property type="match status" value="1"/>
</dbReference>
<dbReference type="PANTHER" id="PTHR43116">
    <property type="entry name" value="PEPTIDE CHAIN RELEASE FACTOR 2"/>
    <property type="match status" value="1"/>
</dbReference>
<dbReference type="Pfam" id="PF03462">
    <property type="entry name" value="PCRF"/>
    <property type="match status" value="1"/>
</dbReference>
<dbReference type="Pfam" id="PF00472">
    <property type="entry name" value="RF-1"/>
    <property type="match status" value="1"/>
</dbReference>
<dbReference type="SMART" id="SM00937">
    <property type="entry name" value="PCRF"/>
    <property type="match status" value="1"/>
</dbReference>
<dbReference type="SUPFAM" id="SSF75620">
    <property type="entry name" value="Release factor"/>
    <property type="match status" value="1"/>
</dbReference>
<dbReference type="PROSITE" id="PS00745">
    <property type="entry name" value="RF_PROK_I"/>
    <property type="match status" value="1"/>
</dbReference>
<comment type="function">
    <text evidence="1">Peptide chain release factor 2 directs the termination of translation in response to the peptide chain termination codons UGA and UAA.</text>
</comment>
<comment type="subcellular location">
    <subcellularLocation>
        <location evidence="1">Cytoplasm</location>
    </subcellularLocation>
</comment>
<comment type="PTM">
    <text evidence="1">Methylated by PrmC. Methylation increases the termination efficiency of RF2.</text>
</comment>
<comment type="similarity">
    <text evidence="1">Belongs to the prokaryotic/mitochondrial release factor family.</text>
</comment>
<feature type="chain" id="PRO_1000004984" description="Peptide chain release factor 2">
    <location>
        <begin position="1"/>
        <end position="362"/>
    </location>
</feature>
<feature type="modified residue" description="N5-methylglutamine" evidence="1">
    <location>
        <position position="250"/>
    </location>
</feature>
<reference key="1">
    <citation type="journal article" date="2006" name="Genome Res.">
        <title>Skewed genomic variability in strains of the toxigenic bacterial pathogen, Clostridium perfringens.</title>
        <authorList>
            <person name="Myers G.S.A."/>
            <person name="Rasko D.A."/>
            <person name="Cheung J.K."/>
            <person name="Ravel J."/>
            <person name="Seshadri R."/>
            <person name="DeBoy R.T."/>
            <person name="Ren Q."/>
            <person name="Varga J."/>
            <person name="Awad M.M."/>
            <person name="Brinkac L.M."/>
            <person name="Daugherty S.C."/>
            <person name="Haft D.H."/>
            <person name="Dodson R.J."/>
            <person name="Madupu R."/>
            <person name="Nelson W.C."/>
            <person name="Rosovitz M.J."/>
            <person name="Sullivan S.A."/>
            <person name="Khouri H."/>
            <person name="Dimitrov G.I."/>
            <person name="Watkins K.L."/>
            <person name="Mulligan S."/>
            <person name="Benton J."/>
            <person name="Radune D."/>
            <person name="Fisher D.J."/>
            <person name="Atkins H.S."/>
            <person name="Hiscox T."/>
            <person name="Jost B.H."/>
            <person name="Billington S.J."/>
            <person name="Songer J.G."/>
            <person name="McClane B.A."/>
            <person name="Titball R.W."/>
            <person name="Rood J.I."/>
            <person name="Melville S.B."/>
            <person name="Paulsen I.T."/>
        </authorList>
    </citation>
    <scope>NUCLEOTIDE SEQUENCE [LARGE SCALE GENOMIC DNA]</scope>
    <source>
        <strain>ATCC 13124 / DSM 756 / JCM 1290 / NCIMB 6125 / NCTC 8237 / S 107 / Type A</strain>
    </source>
</reference>
<reference key="2">
    <citation type="submission" date="2009-08" db="EMBL/GenBank/DDBJ databases">
        <authorList>
            <person name="Shrivastava S."/>
            <person name="Brinkac L.M."/>
            <person name="Dodson R.J."/>
            <person name="Harkins D.M."/>
            <person name="Durkin A.S."/>
            <person name="Sutton G."/>
        </authorList>
    </citation>
    <scope>SEQUENCE REVISION TO 25</scope>
</reference>
<gene>
    <name evidence="1" type="primary">prfB</name>
    <name type="ordered locus">CPF_2428</name>
</gene>
<sequence>MELENQLSKLHELKNNLKEMGASLCLASLEKKSAELELKMQEAGFWDDVQKAQEVTQEAKRVKDKIDKFKNLNERIDDVEVLKELMEENDEETAKEIISEVKALSKEIDTLKIETILSGEYDRNDAILTLHTGVGGSDANDWTEMLLRMYTRWCEKKGYSLETIDYLPGDEAGVKSVTLKVKGEFAYGYLKAEKGIHRLVRISPFNANGKRQTSFASVEVLPELTSDQDIEINPVDLRIDTYRAGGAGGQHVNKTESAVRITHIPTGIVVQCQNERSQFSNRDTAMGMLKSKLIELKERAHKEKIEDLTGELKDMGWGSQIRSYVFHPYSMVKDHRTNVETSNVNGVMDGDIDNFIIAYLNS</sequence>
<evidence type="ECO:0000255" key="1">
    <source>
        <dbReference type="HAMAP-Rule" id="MF_00094"/>
    </source>
</evidence>
<accession>Q0TNE1</accession>
<proteinExistence type="inferred from homology"/>
<keyword id="KW-0963">Cytoplasm</keyword>
<keyword id="KW-0488">Methylation</keyword>
<keyword id="KW-0648">Protein biosynthesis</keyword>
<name>RF2_CLOP1</name>
<protein>
    <recommendedName>
        <fullName evidence="1">Peptide chain release factor 2</fullName>
        <shortName evidence="1">RF-2</shortName>
    </recommendedName>
</protein>